<evidence type="ECO:0000255" key="1">
    <source>
        <dbReference type="HAMAP-Rule" id="MF_00239"/>
    </source>
</evidence>
<keyword id="KW-0067">ATP-binding</keyword>
<keyword id="KW-0963">Cytoplasm</keyword>
<keyword id="KW-0418">Kinase</keyword>
<keyword id="KW-0547">Nucleotide-binding</keyword>
<keyword id="KW-1185">Reference proteome</keyword>
<keyword id="KW-0808">Transferase</keyword>
<reference key="1">
    <citation type="journal article" date="2016" name="Stand. Genomic Sci.">
        <title>Complete genome sequence of Methanospirillum hungatei type strain JF1.</title>
        <authorList>
            <person name="Gunsalus R.P."/>
            <person name="Cook L.E."/>
            <person name="Crable B."/>
            <person name="Rohlin L."/>
            <person name="McDonald E."/>
            <person name="Mouttaki H."/>
            <person name="Sieber J.R."/>
            <person name="Poweleit N."/>
            <person name="Zhou H."/>
            <person name="Lapidus A.L."/>
            <person name="Daligault H.E."/>
            <person name="Land M."/>
            <person name="Gilna P."/>
            <person name="Ivanova N."/>
            <person name="Kyrpides N."/>
            <person name="Culley D.E."/>
            <person name="McInerney M.J."/>
        </authorList>
    </citation>
    <scope>NUCLEOTIDE SEQUENCE [LARGE SCALE GENOMIC DNA]</scope>
    <source>
        <strain>ATCC 27890 / DSM 864 / NBRC 100397 / JF-1</strain>
    </source>
</reference>
<accession>Q2FTU1</accession>
<dbReference type="EC" id="2.7.4.25" evidence="1"/>
<dbReference type="EMBL" id="CP000254">
    <property type="protein sequence ID" value="ABD41932.1"/>
    <property type="molecule type" value="Genomic_DNA"/>
</dbReference>
<dbReference type="RefSeq" id="WP_011449190.1">
    <property type="nucleotide sequence ID" value="NC_007796.1"/>
</dbReference>
<dbReference type="SMR" id="Q2FTU1"/>
<dbReference type="FunCoup" id="Q2FTU1">
    <property type="interactions" value="20"/>
</dbReference>
<dbReference type="STRING" id="323259.Mhun_2227"/>
<dbReference type="EnsemblBacteria" id="ABD41932">
    <property type="protein sequence ID" value="ABD41932"/>
    <property type="gene ID" value="Mhun_2227"/>
</dbReference>
<dbReference type="GeneID" id="3924095"/>
<dbReference type="KEGG" id="mhu:Mhun_2227"/>
<dbReference type="eggNOG" id="arCOG01037">
    <property type="taxonomic scope" value="Archaea"/>
</dbReference>
<dbReference type="HOGENOM" id="CLU_079959_1_0_2"/>
<dbReference type="InParanoid" id="Q2FTU1"/>
<dbReference type="OrthoDB" id="31096at2157"/>
<dbReference type="Proteomes" id="UP000001941">
    <property type="component" value="Chromosome"/>
</dbReference>
<dbReference type="GO" id="GO:0005737">
    <property type="term" value="C:cytoplasm"/>
    <property type="evidence" value="ECO:0007669"/>
    <property type="project" value="UniProtKB-SubCell"/>
</dbReference>
<dbReference type="GO" id="GO:0005524">
    <property type="term" value="F:ATP binding"/>
    <property type="evidence" value="ECO:0007669"/>
    <property type="project" value="UniProtKB-UniRule"/>
</dbReference>
<dbReference type="GO" id="GO:0036430">
    <property type="term" value="F:CMP kinase activity"/>
    <property type="evidence" value="ECO:0007669"/>
    <property type="project" value="RHEA"/>
</dbReference>
<dbReference type="GO" id="GO:0036431">
    <property type="term" value="F:dCMP kinase activity"/>
    <property type="evidence" value="ECO:0007669"/>
    <property type="project" value="RHEA"/>
</dbReference>
<dbReference type="GO" id="GO:0006220">
    <property type="term" value="P:pyrimidine nucleotide metabolic process"/>
    <property type="evidence" value="ECO:0007669"/>
    <property type="project" value="UniProtKB-UniRule"/>
</dbReference>
<dbReference type="CDD" id="cd02020">
    <property type="entry name" value="CMPK"/>
    <property type="match status" value="1"/>
</dbReference>
<dbReference type="Gene3D" id="3.40.50.300">
    <property type="entry name" value="P-loop containing nucleotide triphosphate hydrolases"/>
    <property type="match status" value="1"/>
</dbReference>
<dbReference type="HAMAP" id="MF_00239">
    <property type="entry name" value="Cytidyl_kinase_type2"/>
    <property type="match status" value="1"/>
</dbReference>
<dbReference type="InterPro" id="IPR011892">
    <property type="entry name" value="Cyt_kin_arch"/>
</dbReference>
<dbReference type="InterPro" id="IPR011994">
    <property type="entry name" value="Cytidylate_kinase_dom"/>
</dbReference>
<dbReference type="InterPro" id="IPR027417">
    <property type="entry name" value="P-loop_NTPase"/>
</dbReference>
<dbReference type="NCBIfam" id="TIGR02173">
    <property type="entry name" value="cyt_kin_arch"/>
    <property type="match status" value="1"/>
</dbReference>
<dbReference type="Pfam" id="PF13189">
    <property type="entry name" value="Cytidylate_kin2"/>
    <property type="match status" value="1"/>
</dbReference>
<dbReference type="SUPFAM" id="SSF52540">
    <property type="entry name" value="P-loop containing nucleoside triphosphate hydrolases"/>
    <property type="match status" value="1"/>
</dbReference>
<organism>
    <name type="scientific">Methanospirillum hungatei JF-1 (strain ATCC 27890 / DSM 864 / NBRC 100397 / JF-1)</name>
    <dbReference type="NCBI Taxonomy" id="323259"/>
    <lineage>
        <taxon>Archaea</taxon>
        <taxon>Methanobacteriati</taxon>
        <taxon>Methanobacteriota</taxon>
        <taxon>Stenosarchaea group</taxon>
        <taxon>Methanomicrobia</taxon>
        <taxon>Methanomicrobiales</taxon>
        <taxon>Methanospirillaceae</taxon>
        <taxon>Methanospirillum</taxon>
    </lineage>
</organism>
<proteinExistence type="inferred from homology"/>
<feature type="chain" id="PRO_1000005673" description="Cytidylate kinase">
    <location>
        <begin position="1"/>
        <end position="178"/>
    </location>
</feature>
<feature type="binding site" evidence="1">
    <location>
        <begin position="7"/>
        <end position="15"/>
    </location>
    <ligand>
        <name>ATP</name>
        <dbReference type="ChEBI" id="CHEBI:30616"/>
    </ligand>
</feature>
<protein>
    <recommendedName>
        <fullName evidence="1">Cytidylate kinase</fullName>
        <shortName evidence="1">CK</shortName>
        <ecNumber evidence="1">2.7.4.25</ecNumber>
    </recommendedName>
    <alternativeName>
        <fullName evidence="1">Cytidine monophosphate kinase</fullName>
        <shortName evidence="1">CMP kinase</shortName>
    </alternativeName>
</protein>
<comment type="catalytic activity">
    <reaction evidence="1">
        <text>CMP + ATP = CDP + ADP</text>
        <dbReference type="Rhea" id="RHEA:11600"/>
        <dbReference type="ChEBI" id="CHEBI:30616"/>
        <dbReference type="ChEBI" id="CHEBI:58069"/>
        <dbReference type="ChEBI" id="CHEBI:60377"/>
        <dbReference type="ChEBI" id="CHEBI:456216"/>
        <dbReference type="EC" id="2.7.4.25"/>
    </reaction>
</comment>
<comment type="catalytic activity">
    <reaction evidence="1">
        <text>dCMP + ATP = dCDP + ADP</text>
        <dbReference type="Rhea" id="RHEA:25094"/>
        <dbReference type="ChEBI" id="CHEBI:30616"/>
        <dbReference type="ChEBI" id="CHEBI:57566"/>
        <dbReference type="ChEBI" id="CHEBI:58593"/>
        <dbReference type="ChEBI" id="CHEBI:456216"/>
        <dbReference type="EC" id="2.7.4.25"/>
    </reaction>
</comment>
<comment type="subcellular location">
    <subcellularLocation>
        <location evidence="1">Cytoplasm</location>
    </subcellularLocation>
</comment>
<comment type="similarity">
    <text evidence="1">Belongs to the cytidylate kinase family. Type 2 subfamily.</text>
</comment>
<gene>
    <name evidence="1" type="primary">cmk</name>
    <name type="ordered locus">Mhun_2227</name>
</gene>
<name>KCY_METHJ</name>
<sequence>MRITISGLPGSGTTSLTYHLAEMHRLDVISAGEVFRQMARERGLTLAEFGSFCEEDPSVDKLIDERQREIALSNTHIIAEGRLSGWMIQEADLKIWLKASLECRVRRIFDRDQFSDLTAAMQATKEREACEALRYQQYYDIDIGSLSPYHLVLDTEMWTVEQLAIIVSSAIQTLQKSE</sequence>